<accession>Q58750</accession>
<keyword id="KW-1185">Reference proteome</keyword>
<dbReference type="EMBL" id="L77117">
    <property type="protein sequence ID" value="AAB99364.1"/>
    <property type="molecule type" value="Genomic_DNA"/>
</dbReference>
<dbReference type="PIR" id="B64469">
    <property type="entry name" value="B64469"/>
</dbReference>
<dbReference type="RefSeq" id="WP_010870872.1">
    <property type="nucleotide sequence ID" value="NC_000909.1"/>
</dbReference>
<dbReference type="STRING" id="243232.MJ_1355"/>
<dbReference type="PaxDb" id="243232-MJ_1355"/>
<dbReference type="EnsemblBacteria" id="AAB99364">
    <property type="protein sequence ID" value="AAB99364"/>
    <property type="gene ID" value="MJ_1355"/>
</dbReference>
<dbReference type="GeneID" id="1452257"/>
<dbReference type="KEGG" id="mja:MJ_1355"/>
<dbReference type="eggNOG" id="arCOG05079">
    <property type="taxonomic scope" value="Archaea"/>
</dbReference>
<dbReference type="HOGENOM" id="CLU_450283_0_0_2"/>
<dbReference type="InParanoid" id="Q58750"/>
<dbReference type="OrthoDB" id="63976at2157"/>
<dbReference type="PhylomeDB" id="Q58750"/>
<dbReference type="Proteomes" id="UP000000805">
    <property type="component" value="Chromosome"/>
</dbReference>
<dbReference type="InterPro" id="IPR007548">
    <property type="entry name" value="DUF505"/>
</dbReference>
<dbReference type="Pfam" id="PF04458">
    <property type="entry name" value="DUF505"/>
    <property type="match status" value="2"/>
</dbReference>
<dbReference type="PIRSF" id="PIRSF029056">
    <property type="entry name" value="DUF505"/>
    <property type="match status" value="1"/>
</dbReference>
<feature type="chain" id="PRO_0000107294" description="Uncharacterized protein MJ1355">
    <location>
        <begin position="1"/>
        <end position="571"/>
    </location>
</feature>
<gene>
    <name type="ordered locus">MJ1355</name>
</gene>
<sequence length="571" mass="65700">MFLKKRHLEILKKMKETEMQNEIEKALPEEFKTRALELFILGFAELKGDKIIFTEAGKKLMEIVDKIDLEKIPDIFVDSEIIKIMELLEETGNVPEDWMLMLKERFLADENGLTEIGKEILKIYRETHPVVYLTPELLAFIKDMPKIGVYDELITYKNTKEYGDNIINALQAMRLLLISPKTESGKAFSTTKALNYVLKVASLVPNLSRALILRKEDFEILERGETTEEMTESGFYAEGKVTELGQAMMDTYKEMGKVEEKTLPIYVLEDEIKVLKAIEEIKEKYETNPEIIPTYDEIKKRTNIDDLGAVLHTLESKELIKREVVKNKDTYWMTEFGEKVKDLGEVSTDGMKAITYPESGDVPIAEWVIKGKEEGTVKRGITEKGKYLIKLSKTIKRKPYLTKYDISTLIKIPRKRYIHRDELVKLIQGHVGGDEKEIIKSLGEAESKGFIKELQNKMIKLTELGEEVKTAIEMAKIQELLATKFAVTPTTFNILKTIYDHKEEFDKVWKEKSEGKEHKENEIVLLAKYLSLTPEEIKKNLVILKNVGFIGKKGLTDAGVKLVEAYLNFYQ</sequence>
<protein>
    <recommendedName>
        <fullName>Uncharacterized protein MJ1355</fullName>
    </recommendedName>
</protein>
<name>Y1355_METJA</name>
<proteinExistence type="predicted"/>
<organism>
    <name type="scientific">Methanocaldococcus jannaschii (strain ATCC 43067 / DSM 2661 / JAL-1 / JCM 10045 / NBRC 100440)</name>
    <name type="common">Methanococcus jannaschii</name>
    <dbReference type="NCBI Taxonomy" id="243232"/>
    <lineage>
        <taxon>Archaea</taxon>
        <taxon>Methanobacteriati</taxon>
        <taxon>Methanobacteriota</taxon>
        <taxon>Methanomada group</taxon>
        <taxon>Methanococci</taxon>
        <taxon>Methanococcales</taxon>
        <taxon>Methanocaldococcaceae</taxon>
        <taxon>Methanocaldococcus</taxon>
    </lineage>
</organism>
<reference key="1">
    <citation type="journal article" date="1996" name="Science">
        <title>Complete genome sequence of the methanogenic archaeon, Methanococcus jannaschii.</title>
        <authorList>
            <person name="Bult C.J."/>
            <person name="White O."/>
            <person name="Olsen G.J."/>
            <person name="Zhou L."/>
            <person name="Fleischmann R.D."/>
            <person name="Sutton G.G."/>
            <person name="Blake J.A."/>
            <person name="FitzGerald L.M."/>
            <person name="Clayton R.A."/>
            <person name="Gocayne J.D."/>
            <person name="Kerlavage A.R."/>
            <person name="Dougherty B.A."/>
            <person name="Tomb J.-F."/>
            <person name="Adams M.D."/>
            <person name="Reich C.I."/>
            <person name="Overbeek R."/>
            <person name="Kirkness E.F."/>
            <person name="Weinstock K.G."/>
            <person name="Merrick J.M."/>
            <person name="Glodek A."/>
            <person name="Scott J.L."/>
            <person name="Geoghagen N.S.M."/>
            <person name="Weidman J.F."/>
            <person name="Fuhrmann J.L."/>
            <person name="Nguyen D."/>
            <person name="Utterback T.R."/>
            <person name="Kelley J.M."/>
            <person name="Peterson J.D."/>
            <person name="Sadow P.W."/>
            <person name="Hanna M.C."/>
            <person name="Cotton M.D."/>
            <person name="Roberts K.M."/>
            <person name="Hurst M.A."/>
            <person name="Kaine B.P."/>
            <person name="Borodovsky M."/>
            <person name="Klenk H.-P."/>
            <person name="Fraser C.M."/>
            <person name="Smith H.O."/>
            <person name="Woese C.R."/>
            <person name="Venter J.C."/>
        </authorList>
    </citation>
    <scope>NUCLEOTIDE SEQUENCE [LARGE SCALE GENOMIC DNA]</scope>
    <source>
        <strain>ATCC 43067 / DSM 2661 / JAL-1 / JCM 10045 / NBRC 100440</strain>
    </source>
</reference>